<accession>Q57T73</accession>
<protein>
    <recommendedName>
        <fullName evidence="1">3-methyl-2-oxobutanoate hydroxymethyltransferase</fullName>
        <ecNumber evidence="1">2.1.2.11</ecNumber>
    </recommendedName>
    <alternativeName>
        <fullName evidence="1">Ketopantoate hydroxymethyltransferase</fullName>
        <shortName evidence="1">KPHMT</shortName>
    </alternativeName>
</protein>
<dbReference type="EC" id="2.1.2.11" evidence="1"/>
<dbReference type="EMBL" id="AE017220">
    <property type="protein sequence ID" value="AAX64088.1"/>
    <property type="molecule type" value="Genomic_DNA"/>
</dbReference>
<dbReference type="RefSeq" id="WP_000805489.1">
    <property type="nucleotide sequence ID" value="NC_006905.1"/>
</dbReference>
<dbReference type="SMR" id="Q57T73"/>
<dbReference type="KEGG" id="sec:SCH_0182"/>
<dbReference type="HOGENOM" id="CLU_036645_1_0_6"/>
<dbReference type="UniPathway" id="UPA00028">
    <property type="reaction ID" value="UER00003"/>
</dbReference>
<dbReference type="Proteomes" id="UP000000538">
    <property type="component" value="Chromosome"/>
</dbReference>
<dbReference type="GO" id="GO:0005737">
    <property type="term" value="C:cytoplasm"/>
    <property type="evidence" value="ECO:0007669"/>
    <property type="project" value="UniProtKB-SubCell"/>
</dbReference>
<dbReference type="GO" id="GO:0003864">
    <property type="term" value="F:3-methyl-2-oxobutanoate hydroxymethyltransferase activity"/>
    <property type="evidence" value="ECO:0007669"/>
    <property type="project" value="UniProtKB-UniRule"/>
</dbReference>
<dbReference type="GO" id="GO:0000287">
    <property type="term" value="F:magnesium ion binding"/>
    <property type="evidence" value="ECO:0007669"/>
    <property type="project" value="TreeGrafter"/>
</dbReference>
<dbReference type="GO" id="GO:0015940">
    <property type="term" value="P:pantothenate biosynthetic process"/>
    <property type="evidence" value="ECO:0007669"/>
    <property type="project" value="UniProtKB-UniRule"/>
</dbReference>
<dbReference type="CDD" id="cd06557">
    <property type="entry name" value="KPHMT-like"/>
    <property type="match status" value="1"/>
</dbReference>
<dbReference type="FunFam" id="3.20.20.60:FF:000003">
    <property type="entry name" value="3-methyl-2-oxobutanoate hydroxymethyltransferase"/>
    <property type="match status" value="1"/>
</dbReference>
<dbReference type="Gene3D" id="3.20.20.60">
    <property type="entry name" value="Phosphoenolpyruvate-binding domains"/>
    <property type="match status" value="1"/>
</dbReference>
<dbReference type="HAMAP" id="MF_00156">
    <property type="entry name" value="PanB"/>
    <property type="match status" value="1"/>
</dbReference>
<dbReference type="InterPro" id="IPR003700">
    <property type="entry name" value="Pantoate_hydroxy_MeTrfase"/>
</dbReference>
<dbReference type="InterPro" id="IPR015813">
    <property type="entry name" value="Pyrv/PenolPyrv_kinase-like_dom"/>
</dbReference>
<dbReference type="InterPro" id="IPR040442">
    <property type="entry name" value="Pyrv_kinase-like_dom_sf"/>
</dbReference>
<dbReference type="NCBIfam" id="TIGR00222">
    <property type="entry name" value="panB"/>
    <property type="match status" value="1"/>
</dbReference>
<dbReference type="NCBIfam" id="NF001452">
    <property type="entry name" value="PRK00311.1"/>
    <property type="match status" value="1"/>
</dbReference>
<dbReference type="PANTHER" id="PTHR20881">
    <property type="entry name" value="3-METHYL-2-OXOBUTANOATE HYDROXYMETHYLTRANSFERASE"/>
    <property type="match status" value="1"/>
</dbReference>
<dbReference type="PANTHER" id="PTHR20881:SF0">
    <property type="entry name" value="3-METHYL-2-OXOBUTANOATE HYDROXYMETHYLTRANSFERASE"/>
    <property type="match status" value="1"/>
</dbReference>
<dbReference type="Pfam" id="PF02548">
    <property type="entry name" value="Pantoate_transf"/>
    <property type="match status" value="1"/>
</dbReference>
<dbReference type="PIRSF" id="PIRSF000388">
    <property type="entry name" value="Pantoate_hydroxy_MeTrfase"/>
    <property type="match status" value="1"/>
</dbReference>
<dbReference type="SUPFAM" id="SSF51621">
    <property type="entry name" value="Phosphoenolpyruvate/pyruvate domain"/>
    <property type="match status" value="1"/>
</dbReference>
<comment type="function">
    <text evidence="1">Catalyzes the reversible reaction in which hydroxymethyl group from 5,10-methylenetetrahydrofolate is transferred onto alpha-ketoisovalerate to form ketopantoate.</text>
</comment>
<comment type="catalytic activity">
    <reaction evidence="1">
        <text>3-methyl-2-oxobutanoate + (6R)-5,10-methylene-5,6,7,8-tetrahydrofolate + H2O = 2-dehydropantoate + (6S)-5,6,7,8-tetrahydrofolate</text>
        <dbReference type="Rhea" id="RHEA:11824"/>
        <dbReference type="ChEBI" id="CHEBI:11561"/>
        <dbReference type="ChEBI" id="CHEBI:11851"/>
        <dbReference type="ChEBI" id="CHEBI:15377"/>
        <dbReference type="ChEBI" id="CHEBI:15636"/>
        <dbReference type="ChEBI" id="CHEBI:57453"/>
        <dbReference type="EC" id="2.1.2.11"/>
    </reaction>
</comment>
<comment type="cofactor">
    <cofactor evidence="1">
        <name>Mg(2+)</name>
        <dbReference type="ChEBI" id="CHEBI:18420"/>
    </cofactor>
    <text evidence="1">Binds 1 Mg(2+) ion per subunit.</text>
</comment>
<comment type="pathway">
    <text evidence="1">Cofactor biosynthesis; (R)-pantothenate biosynthesis; (R)-pantoate from 3-methyl-2-oxobutanoate: step 1/2.</text>
</comment>
<comment type="subunit">
    <text evidence="1">Homodecamer; pentamer of dimers.</text>
</comment>
<comment type="subcellular location">
    <subcellularLocation>
        <location evidence="1">Cytoplasm</location>
    </subcellularLocation>
</comment>
<comment type="similarity">
    <text evidence="1">Belongs to the PanB family.</text>
</comment>
<reference key="1">
    <citation type="journal article" date="2005" name="Nucleic Acids Res.">
        <title>The genome sequence of Salmonella enterica serovar Choleraesuis, a highly invasive and resistant zoonotic pathogen.</title>
        <authorList>
            <person name="Chiu C.-H."/>
            <person name="Tang P."/>
            <person name="Chu C."/>
            <person name="Hu S."/>
            <person name="Bao Q."/>
            <person name="Yu J."/>
            <person name="Chou Y.-Y."/>
            <person name="Wang H.-S."/>
            <person name="Lee Y.-S."/>
        </authorList>
    </citation>
    <scope>NUCLEOTIDE SEQUENCE [LARGE SCALE GENOMIC DNA]</scope>
    <source>
        <strain>SC-B67</strain>
    </source>
</reference>
<gene>
    <name evidence="1" type="primary">panB</name>
    <name type="ordered locus">SCH_0182</name>
</gene>
<feature type="chain" id="PRO_0000297365" description="3-methyl-2-oxobutanoate hydroxymethyltransferase">
    <location>
        <begin position="1"/>
        <end position="263"/>
    </location>
</feature>
<feature type="active site" description="Proton acceptor" evidence="1">
    <location>
        <position position="180"/>
    </location>
</feature>
<feature type="binding site" evidence="1">
    <location>
        <begin position="45"/>
        <end position="46"/>
    </location>
    <ligand>
        <name>3-methyl-2-oxobutanoate</name>
        <dbReference type="ChEBI" id="CHEBI:11851"/>
    </ligand>
</feature>
<feature type="binding site" evidence="1">
    <location>
        <position position="45"/>
    </location>
    <ligand>
        <name>Mg(2+)</name>
        <dbReference type="ChEBI" id="CHEBI:18420"/>
    </ligand>
</feature>
<feature type="binding site" evidence="1">
    <location>
        <position position="84"/>
    </location>
    <ligand>
        <name>3-methyl-2-oxobutanoate</name>
        <dbReference type="ChEBI" id="CHEBI:11851"/>
    </ligand>
</feature>
<feature type="binding site" evidence="1">
    <location>
        <position position="84"/>
    </location>
    <ligand>
        <name>Mg(2+)</name>
        <dbReference type="ChEBI" id="CHEBI:18420"/>
    </ligand>
</feature>
<feature type="binding site" evidence="1">
    <location>
        <position position="112"/>
    </location>
    <ligand>
        <name>3-methyl-2-oxobutanoate</name>
        <dbReference type="ChEBI" id="CHEBI:11851"/>
    </ligand>
</feature>
<feature type="binding site" evidence="1">
    <location>
        <position position="114"/>
    </location>
    <ligand>
        <name>Mg(2+)</name>
        <dbReference type="ChEBI" id="CHEBI:18420"/>
    </ligand>
</feature>
<name>PANB_SALCH</name>
<sequence length="263" mass="28134">MKPTTISLLQKCKQEKKRFATITAYDYSFAKLFADEGINVMLVGDSLGMTIQGHDSTLPVTVEDIAYHTRAVRRGAPNCLLLSDLPFMAYATPEQACENAAIVMRAGANMVKIEGGAWLVDTVKMLTERAVPVCGHLGLTPQSVNIFGGYKIQGRGDAGQVLLDDALALEAAGAQLLVLECVPVELAKRVTEALSIPVIGIGAGNVTDGQILVMHDAFGITGGHIPKFAKNFLAEAGDMRAAVRQYMAEVESGVYPGEEHSFH</sequence>
<evidence type="ECO:0000255" key="1">
    <source>
        <dbReference type="HAMAP-Rule" id="MF_00156"/>
    </source>
</evidence>
<proteinExistence type="inferred from homology"/>
<keyword id="KW-0963">Cytoplasm</keyword>
<keyword id="KW-0460">Magnesium</keyword>
<keyword id="KW-0479">Metal-binding</keyword>
<keyword id="KW-0566">Pantothenate biosynthesis</keyword>
<keyword id="KW-0808">Transferase</keyword>
<organism>
    <name type="scientific">Salmonella choleraesuis (strain SC-B67)</name>
    <dbReference type="NCBI Taxonomy" id="321314"/>
    <lineage>
        <taxon>Bacteria</taxon>
        <taxon>Pseudomonadati</taxon>
        <taxon>Pseudomonadota</taxon>
        <taxon>Gammaproteobacteria</taxon>
        <taxon>Enterobacterales</taxon>
        <taxon>Enterobacteriaceae</taxon>
        <taxon>Salmonella</taxon>
    </lineage>
</organism>